<organism>
    <name type="scientific">Aliivibrio fischeri (strain ATCC 700601 / ES114)</name>
    <name type="common">Vibrio fischeri</name>
    <dbReference type="NCBI Taxonomy" id="312309"/>
    <lineage>
        <taxon>Bacteria</taxon>
        <taxon>Pseudomonadati</taxon>
        <taxon>Pseudomonadota</taxon>
        <taxon>Gammaproteobacteria</taxon>
        <taxon>Vibrionales</taxon>
        <taxon>Vibrionaceae</taxon>
        <taxon>Aliivibrio</taxon>
    </lineage>
</organism>
<keyword id="KW-1185">Reference proteome</keyword>
<evidence type="ECO:0000255" key="1">
    <source>
        <dbReference type="HAMAP-Rule" id="MF_00816"/>
    </source>
</evidence>
<reference key="1">
    <citation type="journal article" date="2005" name="Proc. Natl. Acad. Sci. U.S.A.">
        <title>Complete genome sequence of Vibrio fischeri: a symbiotic bacterium with pathogenic congeners.</title>
        <authorList>
            <person name="Ruby E.G."/>
            <person name="Urbanowski M."/>
            <person name="Campbell J."/>
            <person name="Dunn A."/>
            <person name="Faini M."/>
            <person name="Gunsalus R."/>
            <person name="Lostroh P."/>
            <person name="Lupp C."/>
            <person name="McCann J."/>
            <person name="Millikan D."/>
            <person name="Schaefer A."/>
            <person name="Stabb E."/>
            <person name="Stevens A."/>
            <person name="Visick K."/>
            <person name="Whistler C."/>
            <person name="Greenberg E.P."/>
        </authorList>
    </citation>
    <scope>NUCLEOTIDE SEQUENCE [LARGE SCALE GENOMIC DNA]</scope>
    <source>
        <strain>ATCC 700601 / ES114</strain>
    </source>
</reference>
<comment type="similarity">
    <text evidence="1">Belongs to the UPF0352 family.</text>
</comment>
<name>Y1649_ALIF1</name>
<accession>Q5E4A2</accession>
<feature type="chain" id="PRO_0000201802" description="UPF0352 protein VF_1649">
    <location>
        <begin position="1"/>
        <end position="75"/>
    </location>
</feature>
<sequence length="75" mass="8377">MAITSKYSNKQIEQMLTEMVDVLDKHRAPADLSLMLVGNIATNVLNQEVPAEQRQIIAEKFAQALLSSLDKPKTH</sequence>
<proteinExistence type="inferred from homology"/>
<protein>
    <recommendedName>
        <fullName evidence="1">UPF0352 protein VF_1649</fullName>
    </recommendedName>
</protein>
<dbReference type="EMBL" id="CP000020">
    <property type="protein sequence ID" value="AAW86144.1"/>
    <property type="molecule type" value="Genomic_DNA"/>
</dbReference>
<dbReference type="RefSeq" id="WP_005419945.1">
    <property type="nucleotide sequence ID" value="NZ_CAWLES010000001.1"/>
</dbReference>
<dbReference type="RefSeq" id="YP_205032.1">
    <property type="nucleotide sequence ID" value="NC_006840.2"/>
</dbReference>
<dbReference type="SMR" id="Q5E4A2"/>
<dbReference type="STRING" id="312309.VF_1649"/>
<dbReference type="EnsemblBacteria" id="AAW86144">
    <property type="protein sequence ID" value="AAW86144"/>
    <property type="gene ID" value="VF_1649"/>
</dbReference>
<dbReference type="GeneID" id="54164339"/>
<dbReference type="KEGG" id="vfi:VF_1649"/>
<dbReference type="PATRIC" id="fig|312309.11.peg.1670"/>
<dbReference type="eggNOG" id="COG3082">
    <property type="taxonomic scope" value="Bacteria"/>
</dbReference>
<dbReference type="HOGENOM" id="CLU_175457_0_0_6"/>
<dbReference type="OrthoDB" id="5771474at2"/>
<dbReference type="Proteomes" id="UP000000537">
    <property type="component" value="Chromosome I"/>
</dbReference>
<dbReference type="Gene3D" id="1.10.3390.10">
    <property type="entry name" value="YejL-like"/>
    <property type="match status" value="1"/>
</dbReference>
<dbReference type="HAMAP" id="MF_00816">
    <property type="entry name" value="UPF0352"/>
    <property type="match status" value="1"/>
</dbReference>
<dbReference type="InterPro" id="IPR009857">
    <property type="entry name" value="UPF0352"/>
</dbReference>
<dbReference type="InterPro" id="IPR023202">
    <property type="entry name" value="YejL_sf"/>
</dbReference>
<dbReference type="NCBIfam" id="NF010242">
    <property type="entry name" value="PRK13689.1"/>
    <property type="match status" value="1"/>
</dbReference>
<dbReference type="Pfam" id="PF07208">
    <property type="entry name" value="DUF1414"/>
    <property type="match status" value="1"/>
</dbReference>
<dbReference type="PIRSF" id="PIRSF006188">
    <property type="entry name" value="UCP006188"/>
    <property type="match status" value="1"/>
</dbReference>
<dbReference type="SUPFAM" id="SSF158651">
    <property type="entry name" value="YejL-like"/>
    <property type="match status" value="1"/>
</dbReference>
<gene>
    <name type="ordered locus">VF_1649</name>
</gene>